<comment type="function">
    <text evidence="1">Catalyzes the conversion of heme O to heme A by two successive hydroxylations of the methyl group at C8. The first hydroxylation forms heme I, the second hydroxylation results in an unstable dihydroxymethyl group, which spontaneously dehydrates, resulting in the formyl group of heme A.</text>
</comment>
<comment type="catalytic activity">
    <reaction evidence="1">
        <text>Fe(II)-heme o + 2 A + H2O = Fe(II)-heme a + 2 AH2</text>
        <dbReference type="Rhea" id="RHEA:63388"/>
        <dbReference type="ChEBI" id="CHEBI:13193"/>
        <dbReference type="ChEBI" id="CHEBI:15377"/>
        <dbReference type="ChEBI" id="CHEBI:17499"/>
        <dbReference type="ChEBI" id="CHEBI:60530"/>
        <dbReference type="ChEBI" id="CHEBI:61715"/>
        <dbReference type="EC" id="1.17.99.9"/>
    </reaction>
    <physiologicalReaction direction="left-to-right" evidence="1">
        <dbReference type="Rhea" id="RHEA:63389"/>
    </physiologicalReaction>
</comment>
<comment type="cofactor">
    <cofactor evidence="1">
        <name>heme b</name>
        <dbReference type="ChEBI" id="CHEBI:60344"/>
    </cofactor>
</comment>
<comment type="pathway">
    <text evidence="1">Porphyrin-containing compound metabolism; heme A biosynthesis; heme A from heme O: step 1/1.</text>
</comment>
<comment type="subunit">
    <text evidence="1">Interacts with CtaB.</text>
</comment>
<comment type="subcellular location">
    <subcellularLocation>
        <location evidence="1">Cell membrane</location>
        <topology evidence="1">Multi-pass membrane protein</topology>
    </subcellularLocation>
</comment>
<comment type="domain">
    <text evidence="1">The N-half (TM1-TM4) and C-half (TM5-TM8) domains are connected by an intracellular loop. Each domain is formed from four-helix bundles and they align in a pseudo twofold symmetry manner. The N-half domain is the substrate-heme O binding domain and the C-half domain is the cofactor heme B binding domain.</text>
</comment>
<comment type="domain">
    <text evidence="1">The cysteines of disulfide bond Cys-34 and Cys-41 may be involved in transfer of reducing equivalents from quinol in the membrane to the active site of the enzyme.</text>
</comment>
<comment type="similarity">
    <text evidence="1">Belongs to the COX15/CtaA family. Type 1 subfamily.</text>
</comment>
<evidence type="ECO:0000255" key="1">
    <source>
        <dbReference type="HAMAP-Rule" id="MF_01664"/>
    </source>
</evidence>
<accession>Q67L43</accession>
<sequence length="306" mass="32848">MKALRAVSLANTAVMLLAVLWGAWVTSSDSGDGCGASWPLCKGTFMPDWDYAAIVEFGHRVVSALAGLLSVAVLVWVARVRPSETRLKRLAFGTFFFVVLQGGLGAAAVLRPQPDLVMALHFGFSLLCFTFALLVTVALGQGERAAFQRPDVSAQPVAPGLRTQIWGLAVYTYLVVYLGAYVRHLGASMACTGWPLCNGELIPPLYGPVGANFAHRLGAALAVVLVLRLWWTARRLTERDDLRRGAAWALALMAAQVASGALFPLGYLNLLTQLLHTGLITGFWGVLSYLCYLTLPVGRETVAVSA</sequence>
<name>CTAA_SYMTH</name>
<protein>
    <recommendedName>
        <fullName evidence="1">Heme A synthase</fullName>
        <shortName evidence="1">HAS</shortName>
        <ecNumber evidence="1">1.17.99.9</ecNumber>
    </recommendedName>
    <alternativeName>
        <fullName evidence="1">Cytochrome aa3-controlling protein</fullName>
    </alternativeName>
</protein>
<organism>
    <name type="scientific">Symbiobacterium thermophilum (strain DSM 24528 / JCM 14929 / IAM 14863 / T)</name>
    <dbReference type="NCBI Taxonomy" id="292459"/>
    <lineage>
        <taxon>Bacteria</taxon>
        <taxon>Bacillati</taxon>
        <taxon>Bacillota</taxon>
        <taxon>Clostridia</taxon>
        <taxon>Eubacteriales</taxon>
        <taxon>Symbiobacteriaceae</taxon>
        <taxon>Symbiobacterium</taxon>
    </lineage>
</organism>
<dbReference type="EC" id="1.17.99.9" evidence="1"/>
<dbReference type="EMBL" id="AP006840">
    <property type="protein sequence ID" value="BAD41603.1"/>
    <property type="molecule type" value="Genomic_DNA"/>
</dbReference>
<dbReference type="RefSeq" id="WP_011196740.1">
    <property type="nucleotide sequence ID" value="NC_006177.1"/>
</dbReference>
<dbReference type="SMR" id="Q67L43"/>
<dbReference type="STRING" id="292459.STH2618"/>
<dbReference type="KEGG" id="sth:STH2618"/>
<dbReference type="eggNOG" id="COG1612">
    <property type="taxonomic scope" value="Bacteria"/>
</dbReference>
<dbReference type="HOGENOM" id="CLU_041525_3_0_9"/>
<dbReference type="OrthoDB" id="9816428at2"/>
<dbReference type="UniPathway" id="UPA00269">
    <property type="reaction ID" value="UER00713"/>
</dbReference>
<dbReference type="Proteomes" id="UP000000417">
    <property type="component" value="Chromosome"/>
</dbReference>
<dbReference type="GO" id="GO:0005886">
    <property type="term" value="C:plasma membrane"/>
    <property type="evidence" value="ECO:0007669"/>
    <property type="project" value="UniProtKB-SubCell"/>
</dbReference>
<dbReference type="GO" id="GO:0046872">
    <property type="term" value="F:metal ion binding"/>
    <property type="evidence" value="ECO:0007669"/>
    <property type="project" value="UniProtKB-KW"/>
</dbReference>
<dbReference type="GO" id="GO:0016653">
    <property type="term" value="F:oxidoreductase activity, acting on NAD(P)H, heme protein as acceptor"/>
    <property type="evidence" value="ECO:0007669"/>
    <property type="project" value="InterPro"/>
</dbReference>
<dbReference type="GO" id="GO:0006784">
    <property type="term" value="P:heme A biosynthetic process"/>
    <property type="evidence" value="ECO:0007669"/>
    <property type="project" value="UniProtKB-UniRule"/>
</dbReference>
<dbReference type="HAMAP" id="MF_01664">
    <property type="entry name" value="HemeA_synth_type1"/>
    <property type="match status" value="1"/>
</dbReference>
<dbReference type="InterPro" id="IPR003780">
    <property type="entry name" value="COX15/CtaA_fam"/>
</dbReference>
<dbReference type="InterPro" id="IPR050450">
    <property type="entry name" value="COX15/CtaA_HemeA_synthase"/>
</dbReference>
<dbReference type="InterPro" id="IPR023755">
    <property type="entry name" value="HemeA_Synthase_type1"/>
</dbReference>
<dbReference type="PANTHER" id="PTHR35457">
    <property type="entry name" value="HEME A SYNTHASE"/>
    <property type="match status" value="1"/>
</dbReference>
<dbReference type="PANTHER" id="PTHR35457:SF1">
    <property type="entry name" value="HEME A SYNTHASE"/>
    <property type="match status" value="1"/>
</dbReference>
<dbReference type="Pfam" id="PF02628">
    <property type="entry name" value="COX15-CtaA"/>
    <property type="match status" value="1"/>
</dbReference>
<gene>
    <name evidence="1" type="primary">ctaA</name>
    <name type="ordered locus">STH2618</name>
</gene>
<proteinExistence type="inferred from homology"/>
<feature type="chain" id="PRO_0000349005" description="Heme A synthase">
    <location>
        <begin position="1"/>
        <end position="306"/>
    </location>
</feature>
<feature type="topological domain" description="Cytoplasmic" evidence="1">
    <location>
        <begin position="1"/>
        <end position="5"/>
    </location>
</feature>
<feature type="transmembrane region" description="Helical" evidence="1">
    <location>
        <begin position="6"/>
        <end position="26"/>
    </location>
</feature>
<feature type="topological domain" description="Extracellular" evidence="1">
    <location>
        <begin position="27"/>
        <end position="56"/>
    </location>
</feature>
<feature type="transmembrane region" description="Helical" evidence="1">
    <location>
        <begin position="57"/>
        <end position="77"/>
    </location>
</feature>
<feature type="topological domain" description="Cytoplasmic" evidence="1">
    <location>
        <begin position="78"/>
        <end position="89"/>
    </location>
</feature>
<feature type="transmembrane region" description="Helical" evidence="1">
    <location>
        <begin position="90"/>
        <end position="110"/>
    </location>
</feature>
<feature type="topological domain" description="Extracellular" evidence="1">
    <location>
        <begin position="111"/>
        <end position="116"/>
    </location>
</feature>
<feature type="transmembrane region" description="Helical" evidence="1">
    <location>
        <begin position="117"/>
        <end position="137"/>
    </location>
</feature>
<feature type="topological domain" description="Cytoplasmic" evidence="1">
    <location>
        <begin position="138"/>
        <end position="164"/>
    </location>
</feature>
<feature type="transmembrane region" description="Helical" evidence="1">
    <location>
        <begin position="165"/>
        <end position="185"/>
    </location>
</feature>
<feature type="topological domain" description="Extracellular" evidence="1">
    <location>
        <begin position="186"/>
        <end position="206"/>
    </location>
</feature>
<feature type="transmembrane region" description="Helical" evidence="1">
    <location>
        <begin position="207"/>
        <end position="227"/>
    </location>
</feature>
<feature type="topological domain" description="Cytoplasmic" evidence="1">
    <location>
        <begin position="228"/>
        <end position="247"/>
    </location>
</feature>
<feature type="transmembrane region" description="Helical" evidence="1">
    <location>
        <begin position="248"/>
        <end position="268"/>
    </location>
</feature>
<feature type="topological domain" description="Extracellular" evidence="1">
    <location>
        <begin position="269"/>
        <end position="277"/>
    </location>
</feature>
<feature type="transmembrane region" description="Helical" evidence="1">
    <location>
        <begin position="278"/>
        <end position="298"/>
    </location>
</feature>
<feature type="topological domain" description="Cytoplasmic" evidence="1">
    <location>
        <begin position="299"/>
        <end position="306"/>
    </location>
</feature>
<feature type="active site" evidence="1">
    <location>
        <position position="56"/>
    </location>
</feature>
<feature type="binding site" description="axial binding residue" evidence="1">
    <location>
        <position position="59"/>
    </location>
    <ligand>
        <name>heme o</name>
        <dbReference type="ChEBI" id="CHEBI:24480"/>
    </ligand>
    <ligandPart>
        <name>Fe</name>
        <dbReference type="ChEBI" id="CHEBI:18248"/>
    </ligandPart>
</feature>
<feature type="binding site" description="axial binding residue" evidence="1">
    <location>
        <position position="121"/>
    </location>
    <ligand>
        <name>heme o</name>
        <dbReference type="ChEBI" id="CHEBI:24480"/>
    </ligand>
    <ligandPart>
        <name>Fe</name>
        <dbReference type="ChEBI" id="CHEBI:18248"/>
    </ligandPart>
</feature>
<feature type="binding site" description="axial binding residue" evidence="1">
    <location>
        <position position="215"/>
    </location>
    <ligand>
        <name>heme b</name>
        <dbReference type="ChEBI" id="CHEBI:60344"/>
    </ligand>
    <ligandPart>
        <name>Fe</name>
        <dbReference type="ChEBI" id="CHEBI:18248"/>
    </ligandPart>
</feature>
<feature type="binding site" description="axial binding residue" evidence="1">
    <location>
        <position position="276"/>
    </location>
    <ligand>
        <name>heme b</name>
        <dbReference type="ChEBI" id="CHEBI:60344"/>
    </ligand>
    <ligandPart>
        <name>Fe</name>
        <dbReference type="ChEBI" id="CHEBI:18248"/>
    </ligandPart>
</feature>
<feature type="disulfide bond" description="Essential for catalytic activity" evidence="1">
    <location>
        <begin position="34"/>
        <end position="41"/>
    </location>
</feature>
<feature type="disulfide bond" evidence="1">
    <location>
        <begin position="191"/>
        <end position="197"/>
    </location>
</feature>
<reference key="1">
    <citation type="journal article" date="2004" name="Nucleic Acids Res.">
        <title>Genome sequence of Symbiobacterium thermophilum, an uncultivable bacterium that depends on microbial commensalism.</title>
        <authorList>
            <person name="Ueda K."/>
            <person name="Yamashita A."/>
            <person name="Ishikawa J."/>
            <person name="Shimada M."/>
            <person name="Watsuji T."/>
            <person name="Morimura K."/>
            <person name="Ikeda H."/>
            <person name="Hattori M."/>
            <person name="Beppu T."/>
        </authorList>
    </citation>
    <scope>NUCLEOTIDE SEQUENCE [LARGE SCALE GENOMIC DNA]</scope>
    <source>
        <strain>DSM 24528 / JCM 14929 / IAM 14863 / T</strain>
    </source>
</reference>
<keyword id="KW-1003">Cell membrane</keyword>
<keyword id="KW-1015">Disulfide bond</keyword>
<keyword id="KW-0350">Heme biosynthesis</keyword>
<keyword id="KW-0408">Iron</keyword>
<keyword id="KW-0472">Membrane</keyword>
<keyword id="KW-0479">Metal-binding</keyword>
<keyword id="KW-0560">Oxidoreductase</keyword>
<keyword id="KW-1185">Reference proteome</keyword>
<keyword id="KW-0812">Transmembrane</keyword>
<keyword id="KW-1133">Transmembrane helix</keyword>